<evidence type="ECO:0000250" key="1"/>
<evidence type="ECO:0000255" key="2"/>
<evidence type="ECO:0000256" key="3">
    <source>
        <dbReference type="SAM" id="MobiDB-lite"/>
    </source>
</evidence>
<evidence type="ECO:0000305" key="4"/>
<name>PLYE_NEOFI</name>
<sequence>MYQPLLLLPLLLTSAFATPHDPTTHQALDKRASFPIPSSKGSVTYSSPKSVSGTFDGGLKTYGRGVKCSGQKEGGDKDAVFILEDGATLKNAIIGADQIEGVHCKGSCTIQNVWWTDVCEDALSLKGSGSGTHRIIGGGARNADDKVIQHNSGGKVTIQDFTVQNFGKLYRACGNCSKQFKRTVEISGVKASSGKSLVGINSNYGDTATISGCASSVKEICVEYEGTDNNDKEPKKKGSGPSNACKYKEPLSKC</sequence>
<proteinExistence type="inferred from homology"/>
<organism>
    <name type="scientific">Neosartorya fischeri (strain ATCC 1020 / DSM 3700 / CBS 544.65 / FGSC A1164 / JCM 1740 / NRRL 181 / WB 181)</name>
    <name type="common">Aspergillus fischerianus</name>
    <dbReference type="NCBI Taxonomy" id="331117"/>
    <lineage>
        <taxon>Eukaryota</taxon>
        <taxon>Fungi</taxon>
        <taxon>Dikarya</taxon>
        <taxon>Ascomycota</taxon>
        <taxon>Pezizomycotina</taxon>
        <taxon>Eurotiomycetes</taxon>
        <taxon>Eurotiomycetidae</taxon>
        <taxon>Eurotiales</taxon>
        <taxon>Aspergillaceae</taxon>
        <taxon>Aspergillus</taxon>
        <taxon>Aspergillus subgen. Fumigati</taxon>
    </lineage>
</organism>
<gene>
    <name type="primary">plyE</name>
    <name type="ORF">NFIA_098670</name>
</gene>
<dbReference type="EC" id="4.2.2.2"/>
<dbReference type="EMBL" id="DS027694">
    <property type="protein sequence ID" value="EAW20237.1"/>
    <property type="molecule type" value="Genomic_DNA"/>
</dbReference>
<dbReference type="RefSeq" id="XP_001262134.1">
    <property type="nucleotide sequence ID" value="XM_001262133.1"/>
</dbReference>
<dbReference type="SMR" id="A1DBJ7"/>
<dbReference type="STRING" id="331117.A1DBJ7"/>
<dbReference type="GlyCosmos" id="A1DBJ7">
    <property type="glycosylation" value="1 site, No reported glycans"/>
</dbReference>
<dbReference type="EnsemblFungi" id="EAW20237">
    <property type="protein sequence ID" value="EAW20237"/>
    <property type="gene ID" value="NFIA_098670"/>
</dbReference>
<dbReference type="GeneID" id="4588493"/>
<dbReference type="KEGG" id="nfi:NFIA_098670"/>
<dbReference type="VEuPathDB" id="FungiDB:NFIA_098670"/>
<dbReference type="eggNOG" id="ENOG502QU39">
    <property type="taxonomic scope" value="Eukaryota"/>
</dbReference>
<dbReference type="HOGENOM" id="CLU_044863_3_1_1"/>
<dbReference type="OMA" id="KCTGQVE"/>
<dbReference type="OrthoDB" id="441042at2759"/>
<dbReference type="Proteomes" id="UP000006702">
    <property type="component" value="Unassembled WGS sequence"/>
</dbReference>
<dbReference type="GO" id="GO:0005576">
    <property type="term" value="C:extracellular region"/>
    <property type="evidence" value="ECO:0007669"/>
    <property type="project" value="UniProtKB-SubCell"/>
</dbReference>
<dbReference type="GO" id="GO:0030570">
    <property type="term" value="F:pectate lyase activity"/>
    <property type="evidence" value="ECO:0007669"/>
    <property type="project" value="UniProtKB-EC"/>
</dbReference>
<dbReference type="GO" id="GO:0071555">
    <property type="term" value="P:cell wall organization"/>
    <property type="evidence" value="ECO:0007669"/>
    <property type="project" value="UniProtKB-KW"/>
</dbReference>
<dbReference type="GO" id="GO:0045490">
    <property type="term" value="P:pectin catabolic process"/>
    <property type="evidence" value="ECO:0007669"/>
    <property type="project" value="TreeGrafter"/>
</dbReference>
<dbReference type="FunFam" id="2.160.20.10:FF:000044">
    <property type="entry name" value="Pectate lyase E"/>
    <property type="match status" value="1"/>
</dbReference>
<dbReference type="Gene3D" id="2.160.20.10">
    <property type="entry name" value="Single-stranded right-handed beta-helix, Pectin lyase-like"/>
    <property type="match status" value="1"/>
</dbReference>
<dbReference type="InterPro" id="IPR004898">
    <property type="entry name" value="Pectate_lyase_PlyH/PlyE-like"/>
</dbReference>
<dbReference type="InterPro" id="IPR012334">
    <property type="entry name" value="Pectin_lyas_fold"/>
</dbReference>
<dbReference type="InterPro" id="IPR011050">
    <property type="entry name" value="Pectin_lyase_fold/virulence"/>
</dbReference>
<dbReference type="PANTHER" id="PTHR33407:SF8">
    <property type="entry name" value="PECTATE LYASE E"/>
    <property type="match status" value="1"/>
</dbReference>
<dbReference type="PANTHER" id="PTHR33407">
    <property type="entry name" value="PECTATE LYASE F-RELATED"/>
    <property type="match status" value="1"/>
</dbReference>
<dbReference type="Pfam" id="PF03211">
    <property type="entry name" value="Pectate_lyase"/>
    <property type="match status" value="1"/>
</dbReference>
<dbReference type="SUPFAM" id="SSF51126">
    <property type="entry name" value="Pectin lyase-like"/>
    <property type="match status" value="1"/>
</dbReference>
<accession>A1DBJ7</accession>
<comment type="function">
    <text evidence="1">Pectinolytic enzyme consist of four classes of enzymes: pectin lyase, polygalacturonase, pectin methylesterase and rhamnogalacturonase. Among pectinolytic enzymes, pectin lyase is the most important in depolymerization of pectin, since it cleaves internal glycosidic bonds of highly methylated pectins. Favors pectate, the anion, over pectin, the methyl ester (By similarity).</text>
</comment>
<comment type="catalytic activity">
    <reaction>
        <text>Eliminative cleavage of (1-&gt;4)-alpha-D-galacturonan to give oligosaccharides with 4-deoxy-alpha-D-galact-4-enuronosyl groups at their non-reducing ends.</text>
        <dbReference type="EC" id="4.2.2.2"/>
    </reaction>
</comment>
<comment type="cofactor">
    <cofactor evidence="1">
        <name>Ca(2+)</name>
        <dbReference type="ChEBI" id="CHEBI:29108"/>
    </cofactor>
    <text evidence="1">Binds 1 Ca(2+) ion per subunit.</text>
</comment>
<comment type="subcellular location">
    <subcellularLocation>
        <location evidence="1">Secreted</location>
    </subcellularLocation>
</comment>
<comment type="similarity">
    <text evidence="4">Belongs to the polysaccharide lyase 3 family.</text>
</comment>
<keyword id="KW-0106">Calcium</keyword>
<keyword id="KW-0119">Carbohydrate metabolism</keyword>
<keyword id="KW-0961">Cell wall biogenesis/degradation</keyword>
<keyword id="KW-0325">Glycoprotein</keyword>
<keyword id="KW-0456">Lyase</keyword>
<keyword id="KW-0624">Polysaccharide degradation</keyword>
<keyword id="KW-1185">Reference proteome</keyword>
<keyword id="KW-0964">Secreted</keyword>
<keyword id="KW-0732">Signal</keyword>
<feature type="signal peptide" evidence="2">
    <location>
        <begin position="1"/>
        <end position="17"/>
    </location>
</feature>
<feature type="chain" id="PRO_0000394586" description="Probable pectate lyase E">
    <location>
        <begin position="18"/>
        <end position="254"/>
    </location>
</feature>
<feature type="region of interest" description="Disordered" evidence="3">
    <location>
        <begin position="227"/>
        <end position="254"/>
    </location>
</feature>
<feature type="glycosylation site" description="N-linked (GlcNAc...) asparagine" evidence="2">
    <location>
        <position position="175"/>
    </location>
</feature>
<protein>
    <recommendedName>
        <fullName>Probable pectate lyase E</fullName>
        <ecNumber>4.2.2.2</ecNumber>
    </recommendedName>
</protein>
<reference key="1">
    <citation type="journal article" date="2008" name="PLoS Genet.">
        <title>Genomic islands in the pathogenic filamentous fungus Aspergillus fumigatus.</title>
        <authorList>
            <person name="Fedorova N.D."/>
            <person name="Khaldi N."/>
            <person name="Joardar V.S."/>
            <person name="Maiti R."/>
            <person name="Amedeo P."/>
            <person name="Anderson M.J."/>
            <person name="Crabtree J."/>
            <person name="Silva J.C."/>
            <person name="Badger J.H."/>
            <person name="Albarraq A."/>
            <person name="Angiuoli S."/>
            <person name="Bussey H."/>
            <person name="Bowyer P."/>
            <person name="Cotty P.J."/>
            <person name="Dyer P.S."/>
            <person name="Egan A."/>
            <person name="Galens K."/>
            <person name="Fraser-Liggett C.M."/>
            <person name="Haas B.J."/>
            <person name="Inman J.M."/>
            <person name="Kent R."/>
            <person name="Lemieux S."/>
            <person name="Malavazi I."/>
            <person name="Orvis J."/>
            <person name="Roemer T."/>
            <person name="Ronning C.M."/>
            <person name="Sundaram J.P."/>
            <person name="Sutton G."/>
            <person name="Turner G."/>
            <person name="Venter J.C."/>
            <person name="White O.R."/>
            <person name="Whitty B.R."/>
            <person name="Youngman P."/>
            <person name="Wolfe K.H."/>
            <person name="Goldman G.H."/>
            <person name="Wortman J.R."/>
            <person name="Jiang B."/>
            <person name="Denning D.W."/>
            <person name="Nierman W.C."/>
        </authorList>
    </citation>
    <scope>NUCLEOTIDE SEQUENCE [LARGE SCALE GENOMIC DNA]</scope>
    <source>
        <strain>ATCC 1020 / DSM 3700 / CBS 544.65 / FGSC A1164 / JCM 1740 / NRRL 181 / WB 181</strain>
    </source>
</reference>